<proteinExistence type="predicted"/>
<name>US05_HCMVA</name>
<organismHost>
    <name type="scientific">Homo sapiens</name>
    <name type="common">Human</name>
    <dbReference type="NCBI Taxonomy" id="9606"/>
</organismHost>
<dbReference type="EMBL" id="X17403">
    <property type="protein sequence ID" value="CAA35272.1"/>
    <property type="molecule type" value="Genomic_DNA"/>
</dbReference>
<dbReference type="PIR" id="S09919">
    <property type="entry name" value="S09919"/>
</dbReference>
<dbReference type="Proteomes" id="UP000008991">
    <property type="component" value="Segment"/>
</dbReference>
<organism>
    <name type="scientific">Human cytomegalovirus (strain AD169)</name>
    <name type="common">HHV-5</name>
    <name type="synonym">Human herpesvirus 5</name>
    <dbReference type="NCBI Taxonomy" id="10360"/>
    <lineage>
        <taxon>Viruses</taxon>
        <taxon>Duplodnaviria</taxon>
        <taxon>Heunggongvirae</taxon>
        <taxon>Peploviricota</taxon>
        <taxon>Herviviricetes</taxon>
        <taxon>Herpesvirales</taxon>
        <taxon>Orthoherpesviridae</taxon>
        <taxon>Betaherpesvirinae</taxon>
        <taxon>Cytomegalovirus</taxon>
        <taxon>Cytomegalovirus humanbeta5</taxon>
        <taxon>Human cytomegalovirus</taxon>
    </lineage>
</organism>
<feature type="chain" id="PRO_0000115269" description="Uncharacterized protein US5">
    <location>
        <begin position="1"/>
        <end position="126"/>
    </location>
</feature>
<protein>
    <recommendedName>
        <fullName>Uncharacterized protein US5</fullName>
    </recommendedName>
</protein>
<accession>P16840</accession>
<gene>
    <name type="primary">US5</name>
</gene>
<sequence length="126" mass="14452">MHTQRAGLSAIVATYRYQLATGVVYRDISSTIATEKIPFVENAVLKERAFIETIKQHQEPQRRIPRPVDSYVMLHSNARITTSRVIPQHKYKVTAKNPCRSIKRNAFQTAPSQTQLFISVNNRWLG</sequence>
<reference key="1">
    <citation type="journal article" date="1990" name="Curr. Top. Microbiol. Immunol.">
        <title>Analysis of the protein-coding content of the sequence of human cytomegalovirus strain AD169.</title>
        <authorList>
            <person name="Chee M.S."/>
            <person name="Bankier A.T."/>
            <person name="Beck S."/>
            <person name="Bohni R."/>
            <person name="Brown C.M."/>
            <person name="Cerny R."/>
            <person name="Horsnell T."/>
            <person name="Hutchison C.A. III"/>
            <person name="Kouzarides T."/>
            <person name="Martignetti J.A."/>
            <person name="Preddie E."/>
            <person name="Satchwell S.C."/>
            <person name="Tomlinson P."/>
            <person name="Weston K.M."/>
            <person name="Barrell B.G."/>
        </authorList>
    </citation>
    <scope>NUCLEOTIDE SEQUENCE [LARGE SCALE GENOMIC DNA]</scope>
</reference>